<name>OSMV_SALTY</name>
<gene>
    <name type="primary">osmV</name>
    <name type="ordered locus">STM1491</name>
</gene>
<evidence type="ECO:0000250" key="1"/>
<evidence type="ECO:0000255" key="2">
    <source>
        <dbReference type="PROSITE-ProRule" id="PRU00434"/>
    </source>
</evidence>
<evidence type="ECO:0000255" key="3">
    <source>
        <dbReference type="PROSITE-ProRule" id="PRU00703"/>
    </source>
</evidence>
<evidence type="ECO:0000269" key="4">
    <source>
    </source>
</evidence>
<evidence type="ECO:0000305" key="5"/>
<evidence type="ECO:0000305" key="6">
    <source>
    </source>
</evidence>
<accession>Q8ZPK4</accession>
<keyword id="KW-0067">ATP-binding</keyword>
<keyword id="KW-0129">CBS domain</keyword>
<keyword id="KW-0997">Cell inner membrane</keyword>
<keyword id="KW-1003">Cell membrane</keyword>
<keyword id="KW-0472">Membrane</keyword>
<keyword id="KW-0547">Nucleotide-binding</keyword>
<keyword id="KW-1185">Reference proteome</keyword>
<keyword id="KW-0677">Repeat</keyword>
<keyword id="KW-1278">Translocase</keyword>
<keyword id="KW-0813">Transport</keyword>
<protein>
    <recommendedName>
        <fullName>Osmoprotectant import ATP-binding protein OsmV</fullName>
        <ecNumber>7.6.2.-</ecNumber>
    </recommendedName>
</protein>
<dbReference type="EC" id="7.6.2.-"/>
<dbReference type="EMBL" id="AE006468">
    <property type="protein sequence ID" value="AAL20410.1"/>
    <property type="molecule type" value="Genomic_DNA"/>
</dbReference>
<dbReference type="RefSeq" id="NP_460451.1">
    <property type="nucleotide sequence ID" value="NC_003197.2"/>
</dbReference>
<dbReference type="RefSeq" id="WP_000593086.1">
    <property type="nucleotide sequence ID" value="NC_003197.2"/>
</dbReference>
<dbReference type="SMR" id="Q8ZPK4"/>
<dbReference type="STRING" id="99287.STM1491"/>
<dbReference type="TCDB" id="3.A.1.12.14">
    <property type="family name" value="the atp-binding cassette (abc) superfamily"/>
</dbReference>
<dbReference type="PaxDb" id="99287-STM1491"/>
<dbReference type="GeneID" id="1253009"/>
<dbReference type="KEGG" id="stm:STM1491"/>
<dbReference type="PATRIC" id="fig|99287.12.peg.1576"/>
<dbReference type="HOGENOM" id="CLU_000604_2_2_6"/>
<dbReference type="OMA" id="MYEFNRA"/>
<dbReference type="PhylomeDB" id="Q8ZPK4"/>
<dbReference type="BioCyc" id="SENT99287:STM1491-MONOMER"/>
<dbReference type="Proteomes" id="UP000001014">
    <property type="component" value="Chromosome"/>
</dbReference>
<dbReference type="GO" id="GO:0005886">
    <property type="term" value="C:plasma membrane"/>
    <property type="evidence" value="ECO:0007669"/>
    <property type="project" value="UniProtKB-SubCell"/>
</dbReference>
<dbReference type="GO" id="GO:0005524">
    <property type="term" value="F:ATP binding"/>
    <property type="evidence" value="ECO:0007669"/>
    <property type="project" value="UniProtKB-KW"/>
</dbReference>
<dbReference type="GO" id="GO:0016887">
    <property type="term" value="F:ATP hydrolysis activity"/>
    <property type="evidence" value="ECO:0007669"/>
    <property type="project" value="InterPro"/>
</dbReference>
<dbReference type="GO" id="GO:0031460">
    <property type="term" value="P:glycine betaine transport"/>
    <property type="evidence" value="ECO:0007669"/>
    <property type="project" value="InterPro"/>
</dbReference>
<dbReference type="CDD" id="cd04582">
    <property type="entry name" value="CBS_pair_ABC_OpuCA_assoc"/>
    <property type="match status" value="1"/>
</dbReference>
<dbReference type="FunFam" id="3.40.50.300:FF:000201">
    <property type="entry name" value="Glycine betaine/L-proline ABC transporter ATP-binding protein"/>
    <property type="match status" value="1"/>
</dbReference>
<dbReference type="Gene3D" id="3.10.580.10">
    <property type="entry name" value="CBS-domain"/>
    <property type="match status" value="1"/>
</dbReference>
<dbReference type="Gene3D" id="3.40.50.300">
    <property type="entry name" value="P-loop containing nucleotide triphosphate hydrolases"/>
    <property type="match status" value="1"/>
</dbReference>
<dbReference type="InterPro" id="IPR003593">
    <property type="entry name" value="AAA+_ATPase"/>
</dbReference>
<dbReference type="InterPro" id="IPR003439">
    <property type="entry name" value="ABC_transporter-like_ATP-bd"/>
</dbReference>
<dbReference type="InterPro" id="IPR017871">
    <property type="entry name" value="ABC_transporter-like_CS"/>
</dbReference>
<dbReference type="InterPro" id="IPR000644">
    <property type="entry name" value="CBS_dom"/>
</dbReference>
<dbReference type="InterPro" id="IPR046342">
    <property type="entry name" value="CBS_dom_sf"/>
</dbReference>
<dbReference type="InterPro" id="IPR005892">
    <property type="entry name" value="Gly-betaine_transp_ATP-bd"/>
</dbReference>
<dbReference type="InterPro" id="IPR027417">
    <property type="entry name" value="P-loop_NTPase"/>
</dbReference>
<dbReference type="NCBIfam" id="TIGR01186">
    <property type="entry name" value="proV"/>
    <property type="match status" value="1"/>
</dbReference>
<dbReference type="PANTHER" id="PTHR43117">
    <property type="entry name" value="OSMOPROTECTANT IMPORT ATP-BINDING PROTEIN OSMV"/>
    <property type="match status" value="1"/>
</dbReference>
<dbReference type="PANTHER" id="PTHR43117:SF4">
    <property type="entry name" value="OSMOPROTECTANT IMPORT ATP-BINDING PROTEIN OSMV"/>
    <property type="match status" value="1"/>
</dbReference>
<dbReference type="Pfam" id="PF00005">
    <property type="entry name" value="ABC_tran"/>
    <property type="match status" value="1"/>
</dbReference>
<dbReference type="Pfam" id="PF00571">
    <property type="entry name" value="CBS"/>
    <property type="match status" value="2"/>
</dbReference>
<dbReference type="SMART" id="SM00382">
    <property type="entry name" value="AAA"/>
    <property type="match status" value="1"/>
</dbReference>
<dbReference type="SMART" id="SM00116">
    <property type="entry name" value="CBS"/>
    <property type="match status" value="1"/>
</dbReference>
<dbReference type="SUPFAM" id="SSF54631">
    <property type="entry name" value="CBS-domain pair"/>
    <property type="match status" value="1"/>
</dbReference>
<dbReference type="SUPFAM" id="SSF52540">
    <property type="entry name" value="P-loop containing nucleoside triphosphate hydrolases"/>
    <property type="match status" value="1"/>
</dbReference>
<dbReference type="PROSITE" id="PS00211">
    <property type="entry name" value="ABC_TRANSPORTER_1"/>
    <property type="match status" value="1"/>
</dbReference>
<dbReference type="PROSITE" id="PS50893">
    <property type="entry name" value="ABC_TRANSPORTER_2"/>
    <property type="match status" value="1"/>
</dbReference>
<dbReference type="PROSITE" id="PS51371">
    <property type="entry name" value="CBS"/>
    <property type="match status" value="2"/>
</dbReference>
<reference key="1">
    <citation type="journal article" date="2001" name="Nature">
        <title>Complete genome sequence of Salmonella enterica serovar Typhimurium LT2.</title>
        <authorList>
            <person name="McClelland M."/>
            <person name="Sanderson K.E."/>
            <person name="Spieth J."/>
            <person name="Clifton S.W."/>
            <person name="Latreille P."/>
            <person name="Courtney L."/>
            <person name="Porwollik S."/>
            <person name="Ali J."/>
            <person name="Dante M."/>
            <person name="Du F."/>
            <person name="Hou S."/>
            <person name="Layman D."/>
            <person name="Leonard S."/>
            <person name="Nguyen C."/>
            <person name="Scott K."/>
            <person name="Holmes A."/>
            <person name="Grewal N."/>
            <person name="Mulvaney E."/>
            <person name="Ryan E."/>
            <person name="Sun H."/>
            <person name="Florea L."/>
            <person name="Miller W."/>
            <person name="Stoneking T."/>
            <person name="Nhan M."/>
            <person name="Waterston R."/>
            <person name="Wilson R.K."/>
        </authorList>
    </citation>
    <scope>NUCLEOTIDE SEQUENCE [LARGE SCALE GENOMIC DNA]</scope>
    <source>
        <strain>LT2 / SGSC1412 / ATCC 700720</strain>
    </source>
</reference>
<reference key="2">
    <citation type="journal article" date="2012" name="J. Bacteriol.">
        <title>Identification of a third osmoprotectant transport system, the osmU system, in Salmonella enterica.</title>
        <authorList>
            <person name="Frossard S.M."/>
            <person name="Khan A.A."/>
            <person name="Warrick E.C."/>
            <person name="Gately J.M."/>
            <person name="Hanson A.D."/>
            <person name="Oldham M.L."/>
            <person name="Sanders D.A."/>
            <person name="Csonka L.N."/>
        </authorList>
    </citation>
    <scope>FUNCTION</scope>
    <scope>SUBUNIT</scope>
    <scope>INDUCTION</scope>
    <scope>DISRUPTION PHENOTYPE</scope>
    <scope>GENE NAME</scope>
    <source>
        <strain>LT2</strain>
    </source>
</reference>
<organism>
    <name type="scientific">Salmonella typhimurium (strain LT2 / SGSC1412 / ATCC 700720)</name>
    <dbReference type="NCBI Taxonomy" id="99287"/>
    <lineage>
        <taxon>Bacteria</taxon>
        <taxon>Pseudomonadati</taxon>
        <taxon>Pseudomonadota</taxon>
        <taxon>Gammaproteobacteria</taxon>
        <taxon>Enterobacterales</taxon>
        <taxon>Enterobacteriaceae</taxon>
        <taxon>Salmonella</taxon>
    </lineage>
</organism>
<sequence length="382" mass="42638">MIKLENLTKQFVQKKGQPLKAVDNVNLNVPEGEMCVLLGPSGCGKTTTLKMINRLIAPSSGNILINGENTNDMDAVTLRRNIGYVIQQIGLFPNMTIEENITVVPRMLGWDKARCKQRAEELMDMVALDARKFLHRYPKEMSGGQQQRIGVIRALAADPPVLLMDEPFGAVDPINREVIQNQFLDMQRKLKKTVMLVSHDIDEALKLGDRIAVFRQGRIVQCASPDELLAKPANEFVGSFVGQDRTLKRLLLVSAGDVTDQQPTITARPSTPLSEAFGIMDDHDIRAITVIDNDGKPLGFVKRREARNASGICADITHPFRITGKAEDNLRIVLSRLYESNTSWMPIVDEDGRYNGEISQDYIADYLSSGRTRRALNIHENS</sequence>
<proteinExistence type="evidence at protein level"/>
<comment type="function">
    <text evidence="4">Part of the OsmU ABC transporter complex, which is involved in the uptake of osmoprotectants such as choline-O-sulfate and glycine betaine. Probably responsible for energy coupling to the transport system.</text>
</comment>
<comment type="subunit">
    <text evidence="6">The complex is composed of two ATP-binding proteins (OsmV), two transmembrane proteins (OsmW and OsmY) and a solute-binding protein (OsmX).</text>
</comment>
<comment type="subcellular location">
    <subcellularLocation>
        <location evidence="1">Cell inner membrane</location>
        <topology evidence="1">Peripheral membrane protein</topology>
    </subcellularLocation>
</comment>
<comment type="induction">
    <text evidence="4">Induced by osmotic stress. Part of the osmU operon, which consists of four genes (osmV, osmW, osmX and osmY).</text>
</comment>
<comment type="disruption phenotype">
    <text evidence="4">Deletion of the osmU operon eliminates the residual osmoprotection by glycine betaine in a mutant that is lacking the ProP and the ProU systems. OsmU deletion has no effect on the utilization of glycine betaine as an osmoprotectant when ProP or ProU are functional.</text>
</comment>
<comment type="similarity">
    <text evidence="5">Belongs to the ABC transporter superfamily.</text>
</comment>
<feature type="chain" id="PRO_0000430043" description="Osmoprotectant import ATP-binding protein OsmV">
    <location>
        <begin position="1"/>
        <end position="382"/>
    </location>
</feature>
<feature type="domain" description="ABC transporter" evidence="2">
    <location>
        <begin position="2"/>
        <end position="241"/>
    </location>
</feature>
<feature type="domain" description="CBS 1" evidence="3">
    <location>
        <begin position="258"/>
        <end position="320"/>
    </location>
</feature>
<feature type="domain" description="CBS 2" evidence="3">
    <location>
        <begin position="322"/>
        <end position="373"/>
    </location>
</feature>
<feature type="binding site" evidence="2">
    <location>
        <begin position="39"/>
        <end position="46"/>
    </location>
    <ligand>
        <name>ATP</name>
        <dbReference type="ChEBI" id="CHEBI:30616"/>
    </ligand>
</feature>